<keyword id="KW-0378">Hydrolase</keyword>
<keyword id="KW-0658">Purine biosynthesis</keyword>
<keyword id="KW-1185">Reference proteome</keyword>
<dbReference type="EC" id="3.5.4.10" evidence="1"/>
<dbReference type="EMBL" id="CP000102">
    <property type="protein sequence ID" value="ABC57770.1"/>
    <property type="molecule type" value="Genomic_DNA"/>
</dbReference>
<dbReference type="RefSeq" id="WP_011406969.1">
    <property type="nucleotide sequence ID" value="NC_007681.1"/>
</dbReference>
<dbReference type="SMR" id="Q2NEI3"/>
<dbReference type="STRING" id="339860.Msp_1398"/>
<dbReference type="KEGG" id="mst:Msp_1398"/>
<dbReference type="eggNOG" id="arCOG04727">
    <property type="taxonomic scope" value="Archaea"/>
</dbReference>
<dbReference type="HOGENOM" id="CLU_1352116_0_0_2"/>
<dbReference type="OrthoDB" id="92928at2157"/>
<dbReference type="UniPathway" id="UPA00074">
    <property type="reaction ID" value="UER00135"/>
</dbReference>
<dbReference type="Proteomes" id="UP000001931">
    <property type="component" value="Chromosome"/>
</dbReference>
<dbReference type="GO" id="GO:0003937">
    <property type="term" value="F:IMP cyclohydrolase activity"/>
    <property type="evidence" value="ECO:0007669"/>
    <property type="project" value="UniProtKB-UniRule"/>
</dbReference>
<dbReference type="GO" id="GO:0006189">
    <property type="term" value="P:'de novo' IMP biosynthetic process"/>
    <property type="evidence" value="ECO:0007669"/>
    <property type="project" value="UniProtKB-UniRule"/>
</dbReference>
<dbReference type="Gene3D" id="3.60.20.20">
    <property type="entry name" value="Inosine monophosphate cyclohydrolase-like"/>
    <property type="match status" value="1"/>
</dbReference>
<dbReference type="HAMAP" id="MF_00705">
    <property type="entry name" value="IMP_cyclohydrol"/>
    <property type="match status" value="1"/>
</dbReference>
<dbReference type="InterPro" id="IPR010191">
    <property type="entry name" value="IMP_cyclohydrolase"/>
</dbReference>
<dbReference type="InterPro" id="IPR020600">
    <property type="entry name" value="IMP_cyclohydrolase-like"/>
</dbReference>
<dbReference type="InterPro" id="IPR036795">
    <property type="entry name" value="IMP_cyclohydrolase-like_sf"/>
</dbReference>
<dbReference type="NCBIfam" id="NF003167">
    <property type="entry name" value="PRK04151.1"/>
    <property type="match status" value="1"/>
</dbReference>
<dbReference type="NCBIfam" id="TIGR01922">
    <property type="entry name" value="purO_arch"/>
    <property type="match status" value="1"/>
</dbReference>
<dbReference type="Pfam" id="PF07826">
    <property type="entry name" value="IMP_cyclohyd"/>
    <property type="match status" value="1"/>
</dbReference>
<dbReference type="PIRSF" id="PIRSF004866">
    <property type="entry name" value="IMP_cclhdr_arch"/>
    <property type="match status" value="1"/>
</dbReference>
<dbReference type="SUPFAM" id="SSF75569">
    <property type="entry name" value="Archaeal IMP cyclohydrolase PurO"/>
    <property type="match status" value="1"/>
</dbReference>
<gene>
    <name evidence="1" type="primary">purO</name>
    <name type="ordered locus">Msp_1398</name>
</gene>
<evidence type="ECO:0000255" key="1">
    <source>
        <dbReference type="HAMAP-Rule" id="MF_00705"/>
    </source>
</evidence>
<reference key="1">
    <citation type="journal article" date="2006" name="J. Bacteriol.">
        <title>The genome sequence of Methanosphaera stadtmanae reveals why this human intestinal archaeon is restricted to methanol and H2 for methane formation and ATP synthesis.</title>
        <authorList>
            <person name="Fricke W.F."/>
            <person name="Seedorf H."/>
            <person name="Henne A."/>
            <person name="Kruer M."/>
            <person name="Liesegang H."/>
            <person name="Hedderich R."/>
            <person name="Gottschalk G."/>
            <person name="Thauer R.K."/>
        </authorList>
    </citation>
    <scope>NUCLEOTIDE SEQUENCE [LARGE SCALE GENOMIC DNA]</scope>
    <source>
        <strain>ATCC 43021 / DSM 3091 / JCM 11832 / MCB-3</strain>
    </source>
</reference>
<protein>
    <recommendedName>
        <fullName evidence="1">IMP cyclohydrolase</fullName>
        <ecNumber evidence="1">3.5.4.10</ecNumber>
    </recommendedName>
    <alternativeName>
        <fullName evidence="1">IMP synthase</fullName>
    </alternativeName>
    <alternativeName>
        <fullName evidence="1">Inosinicase</fullName>
    </alternativeName>
</protein>
<sequence>MYLGRIISIGSSKDGVYASYRVSSRSFPNRKSVVNNQKVAIIPTQGSEDDIYKNPYISYNCIDIIDDICVVTNGSHTDIIAGKIREGMNMKDAVALSLLTMDYEKDDYNTPRIGGAINTKGEGYIGIVTHEGIEVKKVNPGESFYVSTYEHNTPREVDYTATNAKEATEFIFNGGIFSEFTHPVTSCAAFNKDEWEIDFKNP</sequence>
<accession>Q2NEI3</accession>
<proteinExistence type="inferred from homology"/>
<feature type="chain" id="PRO_0000349168" description="IMP cyclohydrolase">
    <location>
        <begin position="1"/>
        <end position="202"/>
    </location>
</feature>
<organism>
    <name type="scientific">Methanosphaera stadtmanae (strain ATCC 43021 / DSM 3091 / JCM 11832 / MCB-3)</name>
    <dbReference type="NCBI Taxonomy" id="339860"/>
    <lineage>
        <taxon>Archaea</taxon>
        <taxon>Methanobacteriati</taxon>
        <taxon>Methanobacteriota</taxon>
        <taxon>Methanomada group</taxon>
        <taxon>Methanobacteria</taxon>
        <taxon>Methanobacteriales</taxon>
        <taxon>Methanobacteriaceae</taxon>
        <taxon>Methanosphaera</taxon>
    </lineage>
</organism>
<comment type="function">
    <text evidence="1">Catalyzes the cyclization of 5-formylamidoimidazole-4-carboxamide ribonucleotide to IMP.</text>
</comment>
<comment type="catalytic activity">
    <reaction evidence="1">
        <text>IMP + H2O = 5-formamido-1-(5-phospho-D-ribosyl)imidazole-4-carboxamide</text>
        <dbReference type="Rhea" id="RHEA:18445"/>
        <dbReference type="ChEBI" id="CHEBI:15377"/>
        <dbReference type="ChEBI" id="CHEBI:58053"/>
        <dbReference type="ChEBI" id="CHEBI:58467"/>
        <dbReference type="EC" id="3.5.4.10"/>
    </reaction>
</comment>
<comment type="pathway">
    <text evidence="1">Purine metabolism; IMP biosynthesis via de novo pathway; IMP from 5-formamido-1-(5-phospho-D-ribosyl)imidazole-4-carboxamide: step 1/1.</text>
</comment>
<comment type="similarity">
    <text evidence="1">Belongs to the archaeal IMP cyclohydrolase family.</text>
</comment>
<name>PURO_METST</name>